<comment type="function">
    <text evidence="1">Single strand-specific metallo-endoribonuclease involved in late-stage 70S ribosome quality control and in maturation of the 3' terminus of the 16S rRNA.</text>
</comment>
<comment type="cofactor">
    <cofactor evidence="1">
        <name>Zn(2+)</name>
        <dbReference type="ChEBI" id="CHEBI:29105"/>
    </cofactor>
    <text evidence="1">Binds 1 zinc ion.</text>
</comment>
<comment type="subcellular location">
    <subcellularLocation>
        <location evidence="1">Cytoplasm</location>
    </subcellularLocation>
</comment>
<comment type="similarity">
    <text evidence="1">Belongs to the endoribonuclease YbeY family.</text>
</comment>
<organism>
    <name type="scientific">Nitrosococcus oceani (strain ATCC 19707 / BCRC 17464 / JCM 30415 / NCIMB 11848 / C-107)</name>
    <dbReference type="NCBI Taxonomy" id="323261"/>
    <lineage>
        <taxon>Bacteria</taxon>
        <taxon>Pseudomonadati</taxon>
        <taxon>Pseudomonadota</taxon>
        <taxon>Gammaproteobacteria</taxon>
        <taxon>Chromatiales</taxon>
        <taxon>Chromatiaceae</taxon>
        <taxon>Nitrosococcus</taxon>
    </lineage>
</organism>
<name>YBEY_NITOC</name>
<feature type="chain" id="PRO_0000284257" description="Endoribonuclease YbeY">
    <location>
        <begin position="1"/>
        <end position="153"/>
    </location>
</feature>
<feature type="binding site" evidence="1">
    <location>
        <position position="114"/>
    </location>
    <ligand>
        <name>Zn(2+)</name>
        <dbReference type="ChEBI" id="CHEBI:29105"/>
        <note>catalytic</note>
    </ligand>
</feature>
<feature type="binding site" evidence="1">
    <location>
        <position position="118"/>
    </location>
    <ligand>
        <name>Zn(2+)</name>
        <dbReference type="ChEBI" id="CHEBI:29105"/>
        <note>catalytic</note>
    </ligand>
</feature>
<feature type="binding site" evidence="1">
    <location>
        <position position="124"/>
    </location>
    <ligand>
        <name>Zn(2+)</name>
        <dbReference type="ChEBI" id="CHEBI:29105"/>
        <note>catalytic</note>
    </ligand>
</feature>
<gene>
    <name evidence="1" type="primary">ybeY</name>
    <name type="ordered locus">Noc_0239</name>
</gene>
<accession>Q3JEH7</accession>
<reference key="1">
    <citation type="journal article" date="2006" name="Appl. Environ. Microbiol.">
        <title>Complete genome sequence of the marine, chemolithoautotrophic, ammonia-oxidizing bacterium Nitrosococcus oceani ATCC 19707.</title>
        <authorList>
            <person name="Klotz M.G."/>
            <person name="Arp D.J."/>
            <person name="Chain P.S.G."/>
            <person name="El-Sheikh A.F."/>
            <person name="Hauser L.J."/>
            <person name="Hommes N.G."/>
            <person name="Larimer F.W."/>
            <person name="Malfatti S.A."/>
            <person name="Norton J.M."/>
            <person name="Poret-Peterson A.T."/>
            <person name="Vergez L.M."/>
            <person name="Ward B.B."/>
        </authorList>
    </citation>
    <scope>NUCLEOTIDE SEQUENCE [LARGE SCALE GENOMIC DNA]</scope>
    <source>
        <strain>ATCC 19707 / BCRC 17464 / JCM 30415 / NCIMB 11848 / C-107</strain>
    </source>
</reference>
<protein>
    <recommendedName>
        <fullName evidence="1">Endoribonuclease YbeY</fullName>
        <ecNumber evidence="1">3.1.-.-</ecNumber>
    </recommendedName>
</protein>
<sequence>MSITVHIQYAVPKASVPLQADFLRWVKAALVNQSKAGEITIRVASESEAAQLNWRYRHKEGATNILSFPFEVPSCVSLDVPLLGDLVICAPVVAREALEQTKKEQAHWAHLVVHGVLHLLGFDHQQEVEAQQMESLEVTILESLGYPDPYESV</sequence>
<dbReference type="EC" id="3.1.-.-" evidence="1"/>
<dbReference type="EMBL" id="CP000127">
    <property type="protein sequence ID" value="ABA56769.1"/>
    <property type="molecule type" value="Genomic_DNA"/>
</dbReference>
<dbReference type="RefSeq" id="WP_011330272.1">
    <property type="nucleotide sequence ID" value="NC_007484.1"/>
</dbReference>
<dbReference type="SMR" id="Q3JEH7"/>
<dbReference type="FunCoup" id="Q3JEH7">
    <property type="interactions" value="246"/>
</dbReference>
<dbReference type="STRING" id="323261.Noc_0239"/>
<dbReference type="KEGG" id="noc:Noc_0239"/>
<dbReference type="eggNOG" id="COG0319">
    <property type="taxonomic scope" value="Bacteria"/>
</dbReference>
<dbReference type="HOGENOM" id="CLU_106710_0_1_6"/>
<dbReference type="InParanoid" id="Q3JEH7"/>
<dbReference type="Proteomes" id="UP000006838">
    <property type="component" value="Chromosome"/>
</dbReference>
<dbReference type="GO" id="GO:0005737">
    <property type="term" value="C:cytoplasm"/>
    <property type="evidence" value="ECO:0007669"/>
    <property type="project" value="UniProtKB-SubCell"/>
</dbReference>
<dbReference type="GO" id="GO:0004222">
    <property type="term" value="F:metalloendopeptidase activity"/>
    <property type="evidence" value="ECO:0007669"/>
    <property type="project" value="InterPro"/>
</dbReference>
<dbReference type="GO" id="GO:0004521">
    <property type="term" value="F:RNA endonuclease activity"/>
    <property type="evidence" value="ECO:0007669"/>
    <property type="project" value="UniProtKB-UniRule"/>
</dbReference>
<dbReference type="GO" id="GO:0008270">
    <property type="term" value="F:zinc ion binding"/>
    <property type="evidence" value="ECO:0007669"/>
    <property type="project" value="UniProtKB-UniRule"/>
</dbReference>
<dbReference type="GO" id="GO:0006364">
    <property type="term" value="P:rRNA processing"/>
    <property type="evidence" value="ECO:0007669"/>
    <property type="project" value="UniProtKB-UniRule"/>
</dbReference>
<dbReference type="Gene3D" id="3.40.390.30">
    <property type="entry name" value="Metalloproteases ('zincins'), catalytic domain"/>
    <property type="match status" value="1"/>
</dbReference>
<dbReference type="HAMAP" id="MF_00009">
    <property type="entry name" value="Endoribonucl_YbeY"/>
    <property type="match status" value="1"/>
</dbReference>
<dbReference type="InterPro" id="IPR023091">
    <property type="entry name" value="MetalPrtase_cat_dom_sf_prd"/>
</dbReference>
<dbReference type="InterPro" id="IPR002036">
    <property type="entry name" value="YbeY"/>
</dbReference>
<dbReference type="InterPro" id="IPR020549">
    <property type="entry name" value="YbeY_CS"/>
</dbReference>
<dbReference type="NCBIfam" id="TIGR00043">
    <property type="entry name" value="rRNA maturation RNase YbeY"/>
    <property type="match status" value="1"/>
</dbReference>
<dbReference type="PANTHER" id="PTHR46986">
    <property type="entry name" value="ENDORIBONUCLEASE YBEY, CHLOROPLASTIC"/>
    <property type="match status" value="1"/>
</dbReference>
<dbReference type="PANTHER" id="PTHR46986:SF1">
    <property type="entry name" value="ENDORIBONUCLEASE YBEY, CHLOROPLASTIC"/>
    <property type="match status" value="1"/>
</dbReference>
<dbReference type="Pfam" id="PF02130">
    <property type="entry name" value="YbeY"/>
    <property type="match status" value="1"/>
</dbReference>
<dbReference type="SUPFAM" id="SSF55486">
    <property type="entry name" value="Metalloproteases ('zincins'), catalytic domain"/>
    <property type="match status" value="1"/>
</dbReference>
<dbReference type="PROSITE" id="PS01306">
    <property type="entry name" value="UPF0054"/>
    <property type="match status" value="1"/>
</dbReference>
<evidence type="ECO:0000255" key="1">
    <source>
        <dbReference type="HAMAP-Rule" id="MF_00009"/>
    </source>
</evidence>
<proteinExistence type="inferred from homology"/>
<keyword id="KW-0963">Cytoplasm</keyword>
<keyword id="KW-0255">Endonuclease</keyword>
<keyword id="KW-0378">Hydrolase</keyword>
<keyword id="KW-0479">Metal-binding</keyword>
<keyword id="KW-0540">Nuclease</keyword>
<keyword id="KW-1185">Reference proteome</keyword>
<keyword id="KW-0690">Ribosome biogenesis</keyword>
<keyword id="KW-0698">rRNA processing</keyword>
<keyword id="KW-0862">Zinc</keyword>